<keyword id="KW-0067">ATP-binding</keyword>
<keyword id="KW-0143">Chaperone</keyword>
<keyword id="KW-0963">Cytoplasm</keyword>
<keyword id="KW-0547">Nucleotide-binding</keyword>
<keyword id="KW-1185">Reference proteome</keyword>
<keyword id="KW-0346">Stress response</keyword>
<sequence length="624" mass="72407">MAVKQFKAESKRLLDLMINSIYTNKEIFLRELISNASDAIDKCYYRSLVDTNITFNKDDFYIRISADKENKTLTITDTGIGMTKDDLENNLGTIAKSGSFAFKSENEAKEGVDIIGQFGVGFYSAFMVADDVTVISRSVDSEEAYKWESKGVEGYTIEKCEKETPGTEIVLKIKENTDDEKYDEFLDEYKLRSLIKKYSDFIKYPIKMMTKKTRPKKDNDKETEEYLEDETLNSMVPIWRKNKNELKQEDYDNFYMDKHFGFEKPLKTIHSNVEGVVSYNTLLFIPASAPYDFYTKEFEKGLELYSNGVMIMQKCGDLLPDYFSFVQGLVDSPDLSLNISRELLQHDRQLKFIAKKIKEKIKSELLSMAKNDRENYVKFFNSFGRQLKYGVYSDFGSNKEVLQDLLMFYSSTEKKLVTLDEYVSRMKEDQKYIYYAAGESNEKIEKLPQTEVVKDKGYEILYFTDDVDEFAIKMLMKYKEKEFKSVSNKDLGFEADEKESKKETEENKDLFDFMKEVLDGKVKEVRASSRLKSHPVCLSNDGELSIEMEKVLKMMPDNNNVKAEKILEINTNHEMFNSIKAAFKDDKDKLKKYASLLYNEALLIEGLPIEDPVQFANDVASLMK</sequence>
<protein>
    <recommendedName>
        <fullName evidence="1">Chaperone protein HtpG</fullName>
    </recommendedName>
    <alternativeName>
        <fullName evidence="1">Heat shock protein HtpG</fullName>
    </alternativeName>
    <alternativeName>
        <fullName evidence="1">High temperature protein G</fullName>
    </alternativeName>
</protein>
<feature type="chain" id="PRO_0000062981" description="Chaperone protein HtpG">
    <location>
        <begin position="1"/>
        <end position="624"/>
    </location>
</feature>
<feature type="region of interest" description="A; substrate-binding" evidence="1">
    <location>
        <begin position="1"/>
        <end position="341"/>
    </location>
</feature>
<feature type="region of interest" description="B" evidence="1">
    <location>
        <begin position="342"/>
        <end position="550"/>
    </location>
</feature>
<feature type="region of interest" description="C" evidence="1">
    <location>
        <begin position="551"/>
        <end position="624"/>
    </location>
</feature>
<reference key="1">
    <citation type="journal article" date="2001" name="J. Bacteriol.">
        <title>Genome sequence and comparative analysis of the solvent-producing bacterium Clostridium acetobutylicum.</title>
        <authorList>
            <person name="Noelling J."/>
            <person name="Breton G."/>
            <person name="Omelchenko M.V."/>
            <person name="Makarova K.S."/>
            <person name="Zeng Q."/>
            <person name="Gibson R."/>
            <person name="Lee H.M."/>
            <person name="Dubois J."/>
            <person name="Qiu D."/>
            <person name="Hitti J."/>
            <person name="Wolf Y.I."/>
            <person name="Tatusov R.L."/>
            <person name="Sabathe F."/>
            <person name="Doucette-Stamm L.A."/>
            <person name="Soucaille P."/>
            <person name="Daly M.J."/>
            <person name="Bennett G.N."/>
            <person name="Koonin E.V."/>
            <person name="Smith D.R."/>
        </authorList>
    </citation>
    <scope>NUCLEOTIDE SEQUENCE [LARGE SCALE GENOMIC DNA]</scope>
    <source>
        <strain>ATCC 824 / DSM 792 / JCM 1419 / IAM 19013 / LMG 5710 / NBRC 13948 / NRRL B-527 / VKM B-1787 / 2291 / W</strain>
    </source>
</reference>
<proteinExistence type="inferred from homology"/>
<name>HTPG_CLOAB</name>
<comment type="function">
    <text evidence="1">Molecular chaperone. Has ATPase activity.</text>
</comment>
<comment type="subunit">
    <text evidence="1">Homodimer.</text>
</comment>
<comment type="subcellular location">
    <subcellularLocation>
        <location evidence="1">Cytoplasm</location>
    </subcellularLocation>
</comment>
<comment type="similarity">
    <text evidence="1">Belongs to the heat shock protein 90 family.</text>
</comment>
<dbReference type="EMBL" id="AE001437">
    <property type="protein sequence ID" value="AAK81247.1"/>
    <property type="molecule type" value="Genomic_DNA"/>
</dbReference>
<dbReference type="PIR" id="D97307">
    <property type="entry name" value="D97307"/>
</dbReference>
<dbReference type="RefSeq" id="NP_349907.1">
    <property type="nucleotide sequence ID" value="NC_003030.1"/>
</dbReference>
<dbReference type="RefSeq" id="WP_010966587.1">
    <property type="nucleotide sequence ID" value="NC_003030.1"/>
</dbReference>
<dbReference type="SMR" id="Q97E05"/>
<dbReference type="STRING" id="272562.CA_C3315"/>
<dbReference type="GeneID" id="44999809"/>
<dbReference type="KEGG" id="cac:CA_C3315"/>
<dbReference type="PATRIC" id="fig|272562.8.peg.3494"/>
<dbReference type="eggNOG" id="COG0326">
    <property type="taxonomic scope" value="Bacteria"/>
</dbReference>
<dbReference type="HOGENOM" id="CLU_006684_3_0_9"/>
<dbReference type="OrthoDB" id="9802640at2"/>
<dbReference type="Proteomes" id="UP000000814">
    <property type="component" value="Chromosome"/>
</dbReference>
<dbReference type="GO" id="GO:0005737">
    <property type="term" value="C:cytoplasm"/>
    <property type="evidence" value="ECO:0007669"/>
    <property type="project" value="UniProtKB-SubCell"/>
</dbReference>
<dbReference type="GO" id="GO:0005524">
    <property type="term" value="F:ATP binding"/>
    <property type="evidence" value="ECO:0007669"/>
    <property type="project" value="UniProtKB-UniRule"/>
</dbReference>
<dbReference type="GO" id="GO:0016887">
    <property type="term" value="F:ATP hydrolysis activity"/>
    <property type="evidence" value="ECO:0007669"/>
    <property type="project" value="InterPro"/>
</dbReference>
<dbReference type="GO" id="GO:0140662">
    <property type="term" value="F:ATP-dependent protein folding chaperone"/>
    <property type="evidence" value="ECO:0007669"/>
    <property type="project" value="InterPro"/>
</dbReference>
<dbReference type="GO" id="GO:0051082">
    <property type="term" value="F:unfolded protein binding"/>
    <property type="evidence" value="ECO:0007669"/>
    <property type="project" value="UniProtKB-UniRule"/>
</dbReference>
<dbReference type="CDD" id="cd16927">
    <property type="entry name" value="HATPase_Hsp90-like"/>
    <property type="match status" value="1"/>
</dbReference>
<dbReference type="FunFam" id="1.20.120.790:FF:000006">
    <property type="entry name" value="Chaperone protein HtpG"/>
    <property type="match status" value="1"/>
</dbReference>
<dbReference type="FunFam" id="3.40.50.11260:FF:000008">
    <property type="entry name" value="Chaperone protein HtpG"/>
    <property type="match status" value="1"/>
</dbReference>
<dbReference type="FunFam" id="3.30.565.10:FF:000009">
    <property type="entry name" value="Molecular chaperone HtpG"/>
    <property type="match status" value="1"/>
</dbReference>
<dbReference type="Gene3D" id="3.30.230.80">
    <property type="match status" value="1"/>
</dbReference>
<dbReference type="Gene3D" id="3.40.50.11260">
    <property type="match status" value="1"/>
</dbReference>
<dbReference type="Gene3D" id="1.20.120.790">
    <property type="entry name" value="Heat shock protein 90, C-terminal domain"/>
    <property type="match status" value="1"/>
</dbReference>
<dbReference type="Gene3D" id="3.30.565.10">
    <property type="entry name" value="Histidine kinase-like ATPase, C-terminal domain"/>
    <property type="match status" value="1"/>
</dbReference>
<dbReference type="HAMAP" id="MF_00505">
    <property type="entry name" value="HSP90"/>
    <property type="match status" value="1"/>
</dbReference>
<dbReference type="InterPro" id="IPR036890">
    <property type="entry name" value="HATPase_C_sf"/>
</dbReference>
<dbReference type="InterPro" id="IPR019805">
    <property type="entry name" value="Heat_shock_protein_90_CS"/>
</dbReference>
<dbReference type="InterPro" id="IPR037196">
    <property type="entry name" value="HSP90_C"/>
</dbReference>
<dbReference type="InterPro" id="IPR001404">
    <property type="entry name" value="Hsp90_fam"/>
</dbReference>
<dbReference type="InterPro" id="IPR020575">
    <property type="entry name" value="Hsp90_N"/>
</dbReference>
<dbReference type="InterPro" id="IPR020568">
    <property type="entry name" value="Ribosomal_Su5_D2-typ_SF"/>
</dbReference>
<dbReference type="NCBIfam" id="NF003555">
    <property type="entry name" value="PRK05218.1"/>
    <property type="match status" value="1"/>
</dbReference>
<dbReference type="PANTHER" id="PTHR11528">
    <property type="entry name" value="HEAT SHOCK PROTEIN 90 FAMILY MEMBER"/>
    <property type="match status" value="1"/>
</dbReference>
<dbReference type="Pfam" id="PF13589">
    <property type="entry name" value="HATPase_c_3"/>
    <property type="match status" value="1"/>
</dbReference>
<dbReference type="Pfam" id="PF00183">
    <property type="entry name" value="HSP90"/>
    <property type="match status" value="2"/>
</dbReference>
<dbReference type="PIRSF" id="PIRSF002583">
    <property type="entry name" value="Hsp90"/>
    <property type="match status" value="1"/>
</dbReference>
<dbReference type="PRINTS" id="PR00775">
    <property type="entry name" value="HEATSHOCK90"/>
</dbReference>
<dbReference type="SMART" id="SM00387">
    <property type="entry name" value="HATPase_c"/>
    <property type="match status" value="1"/>
</dbReference>
<dbReference type="SUPFAM" id="SSF55874">
    <property type="entry name" value="ATPase domain of HSP90 chaperone/DNA topoisomerase II/histidine kinase"/>
    <property type="match status" value="1"/>
</dbReference>
<dbReference type="SUPFAM" id="SSF110942">
    <property type="entry name" value="HSP90 C-terminal domain"/>
    <property type="match status" value="1"/>
</dbReference>
<dbReference type="SUPFAM" id="SSF54211">
    <property type="entry name" value="Ribosomal protein S5 domain 2-like"/>
    <property type="match status" value="1"/>
</dbReference>
<dbReference type="PROSITE" id="PS00298">
    <property type="entry name" value="HSP90"/>
    <property type="match status" value="1"/>
</dbReference>
<organism>
    <name type="scientific">Clostridium acetobutylicum (strain ATCC 824 / DSM 792 / JCM 1419 / IAM 19013 / LMG 5710 / NBRC 13948 / NRRL B-527 / VKM B-1787 / 2291 / W)</name>
    <dbReference type="NCBI Taxonomy" id="272562"/>
    <lineage>
        <taxon>Bacteria</taxon>
        <taxon>Bacillati</taxon>
        <taxon>Bacillota</taxon>
        <taxon>Clostridia</taxon>
        <taxon>Eubacteriales</taxon>
        <taxon>Clostridiaceae</taxon>
        <taxon>Clostridium</taxon>
    </lineage>
</organism>
<evidence type="ECO:0000255" key="1">
    <source>
        <dbReference type="HAMAP-Rule" id="MF_00505"/>
    </source>
</evidence>
<gene>
    <name evidence="1" type="primary">htpG</name>
    <name type="ordered locus">CA_C3315</name>
</gene>
<accession>Q97E05</accession>